<comment type="function">
    <text evidence="1">Catalyzes the ferrous insertion into protoporphyrin IX.</text>
</comment>
<comment type="catalytic activity">
    <reaction evidence="1">
        <text>heme b + 2 H(+) = protoporphyrin IX + Fe(2+)</text>
        <dbReference type="Rhea" id="RHEA:22584"/>
        <dbReference type="ChEBI" id="CHEBI:15378"/>
        <dbReference type="ChEBI" id="CHEBI:29033"/>
        <dbReference type="ChEBI" id="CHEBI:57306"/>
        <dbReference type="ChEBI" id="CHEBI:60344"/>
        <dbReference type="EC" id="4.98.1.1"/>
    </reaction>
</comment>
<comment type="pathway">
    <text evidence="1">Porphyrin-containing compound metabolism; protoheme biosynthesis; protoheme from protoporphyrin-IX: step 1/1.</text>
</comment>
<comment type="subcellular location">
    <subcellularLocation>
        <location evidence="1">Cytoplasm</location>
    </subcellularLocation>
</comment>
<comment type="similarity">
    <text evidence="1">Belongs to the ferrochelatase family.</text>
</comment>
<gene>
    <name evidence="1" type="primary">hemH</name>
    <name type="ordered locus">TERTU_4338</name>
</gene>
<sequence length="366" mass="41489">MQYKSQNFSHSQNPKTGVLLVNLGTPAAPTAKALKPYLKQFLSDPRVVEFPRLLWWLILNGIILNVRPRKSAAAYAKVWTERGSPLAIHTADQASALNVRLQRRFDDQVVVAWAMRYGSPSMADVQQSLFDQGVQQLLVIPLYPQYSAATTGSTFDALSADFQRRRWLPALRFVNQYHDNPGYIAALAERVRQHWQNNGRADKLILSYHGVPLRYLHAGDPYHCQCLATSRLLAEALQLTESEVITSFQSRFGREEWLQPYTDVLLKQLPGAGVKSVQIMCPGFSSDCLETIEEIGEENREYFLQNGGENYQYIPALNAGEDHIDVLEQLVLDNLQGWSLAPTAKRELEQRQQRADSCPFNQTKKL</sequence>
<organism>
    <name type="scientific">Teredinibacter turnerae (strain ATCC 39867 / T7901)</name>
    <dbReference type="NCBI Taxonomy" id="377629"/>
    <lineage>
        <taxon>Bacteria</taxon>
        <taxon>Pseudomonadati</taxon>
        <taxon>Pseudomonadota</taxon>
        <taxon>Gammaproteobacteria</taxon>
        <taxon>Cellvibrionales</taxon>
        <taxon>Cellvibrionaceae</taxon>
        <taxon>Teredinibacter</taxon>
    </lineage>
</organism>
<proteinExistence type="inferred from homology"/>
<evidence type="ECO:0000255" key="1">
    <source>
        <dbReference type="HAMAP-Rule" id="MF_00323"/>
    </source>
</evidence>
<feature type="chain" id="PRO_1000205158" description="Ferrochelatase">
    <location>
        <begin position="1"/>
        <end position="366"/>
    </location>
</feature>
<feature type="binding site" evidence="1">
    <location>
        <position position="209"/>
    </location>
    <ligand>
        <name>Fe cation</name>
        <dbReference type="ChEBI" id="CHEBI:24875"/>
    </ligand>
</feature>
<feature type="binding site" evidence="1">
    <location>
        <position position="290"/>
    </location>
    <ligand>
        <name>Fe cation</name>
        <dbReference type="ChEBI" id="CHEBI:24875"/>
    </ligand>
</feature>
<reference key="1">
    <citation type="journal article" date="2009" name="PLoS ONE">
        <title>The complete genome of Teredinibacter turnerae T7901: an intracellular endosymbiont of marine wood-boring bivalves (shipworms).</title>
        <authorList>
            <person name="Yang J.C."/>
            <person name="Madupu R."/>
            <person name="Durkin A.S."/>
            <person name="Ekborg N.A."/>
            <person name="Pedamallu C.S."/>
            <person name="Hostetler J.B."/>
            <person name="Radune D."/>
            <person name="Toms B.S."/>
            <person name="Henrissat B."/>
            <person name="Coutinho P.M."/>
            <person name="Schwarz S."/>
            <person name="Field L."/>
            <person name="Trindade-Silva A.E."/>
            <person name="Soares C.A.G."/>
            <person name="Elshahawi S."/>
            <person name="Hanora A."/>
            <person name="Schmidt E.W."/>
            <person name="Haygood M.G."/>
            <person name="Posfai J."/>
            <person name="Benner J."/>
            <person name="Madinger C."/>
            <person name="Nove J."/>
            <person name="Anton B."/>
            <person name="Chaudhary K."/>
            <person name="Foster J."/>
            <person name="Holman A."/>
            <person name="Kumar S."/>
            <person name="Lessard P.A."/>
            <person name="Luyten Y.A."/>
            <person name="Slatko B."/>
            <person name="Wood N."/>
            <person name="Wu B."/>
            <person name="Teplitski M."/>
            <person name="Mougous J.D."/>
            <person name="Ward N."/>
            <person name="Eisen J.A."/>
            <person name="Badger J.H."/>
            <person name="Distel D.L."/>
        </authorList>
    </citation>
    <scope>NUCLEOTIDE SEQUENCE [LARGE SCALE GENOMIC DNA]</scope>
    <source>
        <strain>ATCC 39867 / T7901</strain>
    </source>
</reference>
<dbReference type="EC" id="4.98.1.1" evidence="1"/>
<dbReference type="EMBL" id="CP001614">
    <property type="protein sequence ID" value="ACR11568.1"/>
    <property type="molecule type" value="Genomic_DNA"/>
</dbReference>
<dbReference type="RefSeq" id="WP_015817680.1">
    <property type="nucleotide sequence ID" value="NC_012997.1"/>
</dbReference>
<dbReference type="SMR" id="C5BIF4"/>
<dbReference type="STRING" id="377629.TERTU_4338"/>
<dbReference type="KEGG" id="ttu:TERTU_4338"/>
<dbReference type="eggNOG" id="COG0276">
    <property type="taxonomic scope" value="Bacteria"/>
</dbReference>
<dbReference type="HOGENOM" id="CLU_018884_0_0_6"/>
<dbReference type="OrthoDB" id="9809741at2"/>
<dbReference type="UniPathway" id="UPA00252">
    <property type="reaction ID" value="UER00325"/>
</dbReference>
<dbReference type="Proteomes" id="UP000009080">
    <property type="component" value="Chromosome"/>
</dbReference>
<dbReference type="GO" id="GO:0005737">
    <property type="term" value="C:cytoplasm"/>
    <property type="evidence" value="ECO:0007669"/>
    <property type="project" value="UniProtKB-SubCell"/>
</dbReference>
<dbReference type="GO" id="GO:0004325">
    <property type="term" value="F:ferrochelatase activity"/>
    <property type="evidence" value="ECO:0007669"/>
    <property type="project" value="UniProtKB-UniRule"/>
</dbReference>
<dbReference type="GO" id="GO:0046872">
    <property type="term" value="F:metal ion binding"/>
    <property type="evidence" value="ECO:0007669"/>
    <property type="project" value="UniProtKB-KW"/>
</dbReference>
<dbReference type="GO" id="GO:0006783">
    <property type="term" value="P:heme biosynthetic process"/>
    <property type="evidence" value="ECO:0007669"/>
    <property type="project" value="UniProtKB-UniRule"/>
</dbReference>
<dbReference type="CDD" id="cd00419">
    <property type="entry name" value="Ferrochelatase_C"/>
    <property type="match status" value="1"/>
</dbReference>
<dbReference type="CDD" id="cd03411">
    <property type="entry name" value="Ferrochelatase_N"/>
    <property type="match status" value="1"/>
</dbReference>
<dbReference type="FunFam" id="3.40.50.1400:FF:000002">
    <property type="entry name" value="Ferrochelatase"/>
    <property type="match status" value="1"/>
</dbReference>
<dbReference type="Gene3D" id="3.40.50.1400">
    <property type="match status" value="2"/>
</dbReference>
<dbReference type="HAMAP" id="MF_00323">
    <property type="entry name" value="Ferrochelatase"/>
    <property type="match status" value="1"/>
</dbReference>
<dbReference type="InterPro" id="IPR001015">
    <property type="entry name" value="Ferrochelatase"/>
</dbReference>
<dbReference type="InterPro" id="IPR019772">
    <property type="entry name" value="Ferrochelatase_AS"/>
</dbReference>
<dbReference type="InterPro" id="IPR033644">
    <property type="entry name" value="Ferrochelatase_C"/>
</dbReference>
<dbReference type="InterPro" id="IPR033659">
    <property type="entry name" value="Ferrochelatase_N"/>
</dbReference>
<dbReference type="NCBIfam" id="TIGR00109">
    <property type="entry name" value="hemH"/>
    <property type="match status" value="1"/>
</dbReference>
<dbReference type="PANTHER" id="PTHR11108">
    <property type="entry name" value="FERROCHELATASE"/>
    <property type="match status" value="1"/>
</dbReference>
<dbReference type="PANTHER" id="PTHR11108:SF1">
    <property type="entry name" value="FERROCHELATASE, MITOCHONDRIAL"/>
    <property type="match status" value="1"/>
</dbReference>
<dbReference type="Pfam" id="PF00762">
    <property type="entry name" value="Ferrochelatase"/>
    <property type="match status" value="1"/>
</dbReference>
<dbReference type="SUPFAM" id="SSF53800">
    <property type="entry name" value="Chelatase"/>
    <property type="match status" value="1"/>
</dbReference>
<dbReference type="PROSITE" id="PS00534">
    <property type="entry name" value="FERROCHELATASE"/>
    <property type="match status" value="1"/>
</dbReference>
<keyword id="KW-0963">Cytoplasm</keyword>
<keyword id="KW-0350">Heme biosynthesis</keyword>
<keyword id="KW-0408">Iron</keyword>
<keyword id="KW-0456">Lyase</keyword>
<keyword id="KW-0479">Metal-binding</keyword>
<keyword id="KW-0627">Porphyrin biosynthesis</keyword>
<keyword id="KW-1185">Reference proteome</keyword>
<accession>C5BIF4</accession>
<protein>
    <recommendedName>
        <fullName evidence="1">Ferrochelatase</fullName>
        <ecNumber evidence="1">4.98.1.1</ecNumber>
    </recommendedName>
    <alternativeName>
        <fullName evidence="1">Heme synthase</fullName>
    </alternativeName>
    <alternativeName>
        <fullName evidence="1">Protoheme ferro-lyase</fullName>
    </alternativeName>
</protein>
<name>HEMH_TERTT</name>